<evidence type="ECO:0000250" key="1"/>
<evidence type="ECO:0000250" key="2">
    <source>
        <dbReference type="UniProtKB" id="P04853"/>
    </source>
</evidence>
<evidence type="ECO:0000250" key="3">
    <source>
        <dbReference type="UniProtKB" id="P25465"/>
    </source>
</evidence>
<evidence type="ECO:0000250" key="4">
    <source>
        <dbReference type="UniProtKB" id="Q91UL0"/>
    </source>
</evidence>
<evidence type="ECO:0000250" key="5">
    <source>
        <dbReference type="UniProtKB" id="Q9WAF5"/>
    </source>
</evidence>
<evidence type="ECO:0000255" key="6"/>
<evidence type="ECO:0000305" key="7"/>
<organism>
    <name type="scientific">Human parainfluenza 2 virus (strain Toshiba)</name>
    <name type="common">HPIV-2</name>
    <dbReference type="NCBI Taxonomy" id="11214"/>
    <lineage>
        <taxon>Viruses</taxon>
        <taxon>Riboviria</taxon>
        <taxon>Orthornavirae</taxon>
        <taxon>Negarnaviricota</taxon>
        <taxon>Haploviricotina</taxon>
        <taxon>Monjiviricetes</taxon>
        <taxon>Mononegavirales</taxon>
        <taxon>Paramyxoviridae</taxon>
        <taxon>Rubulavirinae</taxon>
        <taxon>Orthorubulavirus</taxon>
        <taxon>Orthorubulavirus laryngotracheitidis</taxon>
        <taxon>Human parainfluenza 2 virus</taxon>
    </lineage>
</organism>
<keyword id="KW-1015">Disulfide bond</keyword>
<keyword id="KW-0325">Glycoprotein</keyword>
<keyword id="KW-0348">Hemagglutinin</keyword>
<keyword id="KW-1032">Host cell membrane</keyword>
<keyword id="KW-1043">Host membrane</keyword>
<keyword id="KW-0945">Host-virus interaction</keyword>
<keyword id="KW-0378">Hydrolase</keyword>
<keyword id="KW-0472">Membrane</keyword>
<keyword id="KW-1185">Reference proteome</keyword>
<keyword id="KW-0735">Signal-anchor</keyword>
<keyword id="KW-0812">Transmembrane</keyword>
<keyword id="KW-1133">Transmembrane helix</keyword>
<keyword id="KW-1161">Viral attachment to host cell</keyword>
<keyword id="KW-0261">Viral envelope protein</keyword>
<keyword id="KW-0946">Virion</keyword>
<keyword id="KW-1160">Virus entry into host cell</keyword>
<reference key="1">
    <citation type="journal article" date="1990" name="Virology">
        <title>Sequence determination of the hemagglutinin-neuraminidase (HN) gene of human parainfluenza type 2 virus and the construction of a phylogenetic tree for HN proteins of all the paramyxoviruses that are infectious to humans.</title>
        <authorList>
            <person name="Kawano M."/>
            <person name="Bando H."/>
            <person name="Yuasa T."/>
            <person name="Kondo K."/>
            <person name="Tsurudome M."/>
            <person name="Komada H."/>
            <person name="Nishio M."/>
            <person name="Ito Y."/>
        </authorList>
    </citation>
    <scope>NUCLEOTIDE SEQUENCE [MRNA]</scope>
</reference>
<sequence>MEDYSNLSLKSIPKRTCRIIFRTATILGICTLIVLCSSILHEIIHLDVSSGLMDSDDSQQGIIQPIIESLKSLIALANQILYNVAIIIPLKIDSIETVIFSALKDMHTGSMSNTNCTPGNLLLHDAAYINGINKFLVLKSYNGTPKYGPLLNIPSFIPSATSPNGCTRIPSFSLIKTHWCYTHNVMLGDCLDFTTSNQYLAMGIIQQSAAAFPIFRTMKTIYLSDGINRKSCSVTAIPGGCVLYCYVATRSEKEDYATTDLAELRLAFYYYNDTFIERVISLPNTTGQWATINPAVGSGIYHLGFILFPVYGGLISGTPSYNKQSSRYFIPKHPNITCAGNSSEQAAAARSSYVIRYHSNRLIQSAVLICPLSDMHTARCNLVMFNNSQVMMGAEGRLYVIDNNLYYYQRSSSWWSASLFYRINTDFSKGIPPIIEAQWVPSYQVPRPGVMPCNATSFCPANCITGVYADVWPLNDPEPTSQNALNPNYRFAGAFLRNESNRTNPTFYTASASALLNTTGFNNTNHKAAYTSSTCFKNTGTQKIYCLIIIEMGSSLLGEFQIIPFLRELIP</sequence>
<dbReference type="EC" id="3.2.1.18" evidence="3"/>
<dbReference type="EMBL" id="X57559">
    <property type="protein sequence ID" value="CAA40787.1"/>
    <property type="molecule type" value="mRNA"/>
</dbReference>
<dbReference type="PIR" id="A33777">
    <property type="entry name" value="HNNZP2"/>
</dbReference>
<dbReference type="SMR" id="P25466"/>
<dbReference type="CAZy" id="GH83">
    <property type="family name" value="Glycoside Hydrolase Family 83"/>
</dbReference>
<dbReference type="GlyCosmos" id="P25466">
    <property type="glycosylation" value="10 sites, No reported glycans"/>
</dbReference>
<dbReference type="KEGG" id="vg:935188"/>
<dbReference type="Proteomes" id="UP000000472">
    <property type="component" value="Segment"/>
</dbReference>
<dbReference type="GO" id="GO:0020002">
    <property type="term" value="C:host cell plasma membrane"/>
    <property type="evidence" value="ECO:0007669"/>
    <property type="project" value="UniProtKB-SubCell"/>
</dbReference>
<dbReference type="GO" id="GO:0016020">
    <property type="term" value="C:membrane"/>
    <property type="evidence" value="ECO:0007669"/>
    <property type="project" value="UniProtKB-KW"/>
</dbReference>
<dbReference type="GO" id="GO:0019031">
    <property type="term" value="C:viral envelope"/>
    <property type="evidence" value="ECO:0007669"/>
    <property type="project" value="UniProtKB-KW"/>
</dbReference>
<dbReference type="GO" id="GO:0055036">
    <property type="term" value="C:virion membrane"/>
    <property type="evidence" value="ECO:0007669"/>
    <property type="project" value="UniProtKB-SubCell"/>
</dbReference>
<dbReference type="GO" id="GO:0004308">
    <property type="term" value="F:exo-alpha-sialidase activity"/>
    <property type="evidence" value="ECO:0007669"/>
    <property type="project" value="UniProtKB-EC"/>
</dbReference>
<dbReference type="GO" id="GO:0046789">
    <property type="term" value="F:host cell surface receptor binding"/>
    <property type="evidence" value="ECO:0007669"/>
    <property type="project" value="InterPro"/>
</dbReference>
<dbReference type="GO" id="GO:0046718">
    <property type="term" value="P:symbiont entry into host cell"/>
    <property type="evidence" value="ECO:0007669"/>
    <property type="project" value="UniProtKB-KW"/>
</dbReference>
<dbReference type="GO" id="GO:0019062">
    <property type="term" value="P:virion attachment to host cell"/>
    <property type="evidence" value="ECO:0007669"/>
    <property type="project" value="UniProtKB-KW"/>
</dbReference>
<dbReference type="CDD" id="cd15469">
    <property type="entry name" value="HN"/>
    <property type="match status" value="1"/>
</dbReference>
<dbReference type="Gene3D" id="1.20.5.110">
    <property type="match status" value="1"/>
</dbReference>
<dbReference type="Gene3D" id="2.120.10.10">
    <property type="match status" value="1"/>
</dbReference>
<dbReference type="InterPro" id="IPR016285">
    <property type="entry name" value="Hemagglutn-neuramid"/>
</dbReference>
<dbReference type="InterPro" id="IPR000665">
    <property type="entry name" value="Hemagglutn/HN"/>
</dbReference>
<dbReference type="InterPro" id="IPR036278">
    <property type="entry name" value="Sialidase_sf"/>
</dbReference>
<dbReference type="Pfam" id="PF00423">
    <property type="entry name" value="HN"/>
    <property type="match status" value="1"/>
</dbReference>
<dbReference type="PIRSF" id="PIRSF001072">
    <property type="entry name" value="Hemagglut-neuramid_paramyxoV"/>
    <property type="match status" value="1"/>
</dbReference>
<dbReference type="SUPFAM" id="SSF50939">
    <property type="entry name" value="Sialidases"/>
    <property type="match status" value="1"/>
</dbReference>
<organismHost>
    <name type="scientific">Homo sapiens</name>
    <name type="common">Human</name>
    <dbReference type="NCBI Taxonomy" id="9606"/>
</organismHost>
<comment type="function">
    <text evidence="1">Attaches the virus to sialic acid-containing cell receptors and thereby initiating infection. Binding of HN protein to the receptor induces a conformational change that allows the F protein to trigger virion/cell membranes fusion (By similarity).</text>
</comment>
<comment type="function">
    <text evidence="1">Neuraminidase activity ensures the efficient spread of the virus by dissociating the mature virions from the neuraminic acid containing glycoproteins.</text>
</comment>
<comment type="catalytic activity">
    <reaction evidence="3">
        <text>Hydrolysis of alpha-(2-&gt;3)-, alpha-(2-&gt;6)-, alpha-(2-&gt;8)- glycosidic linkages of terminal sialic acid residues in oligosaccharides, glycoproteins, glycolipids, colominic acid and synthetic substrates.</text>
        <dbReference type="EC" id="3.2.1.18"/>
    </reaction>
</comment>
<comment type="subunit">
    <text evidence="2 5">Homotetramer; composed of disulfide-linked homodimers (By similarity). Interacts with F protein trimer (By similarity).</text>
</comment>
<comment type="subcellular location">
    <subcellularLocation>
        <location evidence="7">Virion membrane</location>
        <topology evidence="7">Single-pass type II membrane protein</topology>
    </subcellularLocation>
    <subcellularLocation>
        <location evidence="7">Host cell membrane</location>
        <topology evidence="7">Single-pass type II membrane protein</topology>
    </subcellularLocation>
</comment>
<comment type="domain">
    <text evidence="5">The C-terminus (head domain) is involved in binding the cellular receptor.</text>
</comment>
<comment type="similarity">
    <text evidence="7">Belongs to the paramyxoviruses hemagglutinin-neuraminidase family.</text>
</comment>
<proteinExistence type="evidence at transcript level"/>
<accession>P25466</accession>
<name>HN_PI2HT</name>
<gene>
    <name type="primary">HN</name>
</gene>
<feature type="chain" id="PRO_0000142623" description="Hemagglutinin-neuraminidase">
    <location>
        <begin position="1"/>
        <end position="571"/>
    </location>
</feature>
<feature type="topological domain" description="Intravirion" evidence="6">
    <location>
        <begin position="1"/>
        <end position="25"/>
    </location>
</feature>
<feature type="transmembrane region" description="Helical" evidence="6">
    <location>
        <begin position="26"/>
        <end position="46"/>
    </location>
</feature>
<feature type="topological domain" description="Virion surface" evidence="6">
    <location>
        <begin position="47"/>
        <end position="571"/>
    </location>
</feature>
<feature type="region of interest" description="Important for neuraminidase activity" evidence="1">
    <location>
        <begin position="228"/>
        <end position="233"/>
    </location>
</feature>
<feature type="region of interest" description="Involved in neuraminidase activity" evidence="4">
    <location>
        <begin position="228"/>
        <end position="233"/>
    </location>
</feature>
<feature type="region of interest" description="Sialic receptor-binding site" evidence="7">
    <location>
        <begin position="393"/>
        <end position="398"/>
    </location>
</feature>
<feature type="glycosylation site" description="N-linked (GlcNAc...) asparagine; by host" evidence="6">
    <location>
        <position position="272"/>
    </location>
</feature>
<feature type="glycosylation site" description="N-linked (GlcNAc...) asparagine; by host" evidence="6">
    <location>
        <position position="284"/>
    </location>
</feature>
<feature type="glycosylation site" description="N-linked (GlcNAc...) asparagine; by host" evidence="6">
    <location>
        <position position="335"/>
    </location>
</feature>
<feature type="glycosylation site" description="N-linked (GlcNAc...) asparagine; by host" evidence="6">
    <location>
        <position position="341"/>
    </location>
</feature>
<feature type="glycosylation site" description="N-linked (GlcNAc...) asparagine; by host" evidence="6">
    <location>
        <position position="386"/>
    </location>
</feature>
<feature type="glycosylation site" description="N-linked (GlcNAc...) asparagine; by host" evidence="6">
    <location>
        <position position="454"/>
    </location>
</feature>
<feature type="glycosylation site" description="N-linked (GlcNAc...) asparagine; by host" evidence="6">
    <location>
        <position position="498"/>
    </location>
</feature>
<feature type="glycosylation site" description="N-linked (GlcNAc...) asparagine; by host" evidence="6">
    <location>
        <position position="501"/>
    </location>
</feature>
<feature type="glycosylation site" description="N-linked (GlcNAc...) asparagine; by host" evidence="6">
    <location>
        <position position="517"/>
    </location>
</feature>
<feature type="glycosylation site" description="N-linked (GlcNAc...) asparagine; by host" evidence="6">
    <location>
        <position position="522"/>
    </location>
</feature>
<feature type="disulfide bond" evidence="5">
    <location>
        <begin position="166"/>
        <end position="190"/>
    </location>
</feature>
<feature type="disulfide bond" evidence="5">
    <location>
        <begin position="180"/>
        <end position="241"/>
    </location>
</feature>
<feature type="disulfide bond" evidence="5">
    <location>
        <begin position="232"/>
        <end position="245"/>
    </location>
</feature>
<feature type="disulfide bond" evidence="5">
    <location>
        <begin position="338"/>
        <end position="459"/>
    </location>
</feature>
<feature type="disulfide bond" evidence="5">
    <location>
        <begin position="370"/>
        <end position="380"/>
    </location>
</feature>
<feature type="disulfide bond" evidence="5">
    <location>
        <begin position="453"/>
        <end position="463"/>
    </location>
</feature>
<feature type="disulfide bond" evidence="5">
    <location>
        <begin position="535"/>
        <end position="546"/>
    </location>
</feature>
<protein>
    <recommendedName>
        <fullName>Hemagglutinin-neuraminidase</fullName>
        <ecNumber evidence="3">3.2.1.18</ecNumber>
    </recommendedName>
</protein>